<proteinExistence type="evidence at protein level"/>
<organism>
    <name type="scientific">Lathyrus tingitanus</name>
    <name type="common">Tangier pea</name>
    <dbReference type="NCBI Taxonomy" id="3862"/>
    <lineage>
        <taxon>Eukaryota</taxon>
        <taxon>Viridiplantae</taxon>
        <taxon>Streptophyta</taxon>
        <taxon>Embryophyta</taxon>
        <taxon>Tracheophyta</taxon>
        <taxon>Spermatophyta</taxon>
        <taxon>Magnoliopsida</taxon>
        <taxon>eudicotyledons</taxon>
        <taxon>Gunneridae</taxon>
        <taxon>Pentapetalae</taxon>
        <taxon>rosids</taxon>
        <taxon>fabids</taxon>
        <taxon>Fabales</taxon>
        <taxon>Fabaceae</taxon>
        <taxon>Papilionoideae</taxon>
        <taxon>50 kb inversion clade</taxon>
        <taxon>NPAAA clade</taxon>
        <taxon>Hologalegina</taxon>
        <taxon>IRL clade</taxon>
        <taxon>Fabeae</taxon>
        <taxon>Lathyrus</taxon>
    </lineage>
</organism>
<dbReference type="PIR" id="JA0004">
    <property type="entry name" value="LNLDAT"/>
</dbReference>
<dbReference type="SMR" id="P07444"/>
<dbReference type="GO" id="GO:0030246">
    <property type="term" value="F:carbohydrate binding"/>
    <property type="evidence" value="ECO:0007669"/>
    <property type="project" value="UniProtKB-KW"/>
</dbReference>
<dbReference type="Gene3D" id="2.60.120.200">
    <property type="match status" value="1"/>
</dbReference>
<dbReference type="InterPro" id="IPR013320">
    <property type="entry name" value="ConA-like_dom_sf"/>
</dbReference>
<dbReference type="InterPro" id="IPR000985">
    <property type="entry name" value="Lectin_LegA_CS"/>
</dbReference>
<dbReference type="InterPro" id="IPR001220">
    <property type="entry name" value="Legume_lectin_dom"/>
</dbReference>
<dbReference type="Pfam" id="PF00139">
    <property type="entry name" value="Lectin_legB"/>
    <property type="match status" value="1"/>
</dbReference>
<dbReference type="SUPFAM" id="SSF49899">
    <property type="entry name" value="Concanavalin A-like lectins/glucanases"/>
    <property type="match status" value="1"/>
</dbReference>
<dbReference type="PROSITE" id="PS00308">
    <property type="entry name" value="LECTIN_LEGUME_ALPHA"/>
    <property type="match status" value="1"/>
</dbReference>
<sequence>VTSYTLNEIVPLKDVVPEWVRIGFSATTGAEFAAHEVLSWSFHSELEETSASKQ</sequence>
<evidence type="ECO:0000305" key="1"/>
<accession>P07444</accession>
<feature type="chain" id="PRO_0000105108" description="Lectin alpha chain">
    <location>
        <begin position="1"/>
        <end position="54"/>
    </location>
</feature>
<reference key="1">
    <citation type="journal article" date="1986" name="Phytochemistry">
        <title>The amino acid sequences of the alpha subunits of the lectins from the seeds of Lathyrus hirsutus and Lathyrus tingitanus.</title>
        <authorList>
            <person name="Yarwood A."/>
            <person name="Richardson M."/>
            <person name="Sousa-Cavada B."/>
            <person name="Pere D."/>
            <person name="Rouge P."/>
        </authorList>
    </citation>
    <scope>PROTEIN SEQUENCE</scope>
</reference>
<keyword id="KW-0903">Direct protein sequencing</keyword>
<keyword id="KW-0430">Lectin</keyword>
<protein>
    <recommendedName>
        <fullName>Lectin alpha chain</fullName>
    </recommendedName>
</protein>
<comment type="subunit">
    <text>Tetramer of two alpha and two beta chains.</text>
</comment>
<comment type="similarity">
    <text evidence="1">Belongs to the leguminous lectin family.</text>
</comment>
<name>LECA_LATTI</name>